<dbReference type="EMBL" id="AP008232">
    <property type="protein sequence ID" value="BAE75060.1"/>
    <property type="molecule type" value="Genomic_DNA"/>
</dbReference>
<dbReference type="RefSeq" id="WP_011411609.1">
    <property type="nucleotide sequence ID" value="NC_007712.1"/>
</dbReference>
<dbReference type="SMR" id="Q2NS15"/>
<dbReference type="STRING" id="343509.SG1785"/>
<dbReference type="KEGG" id="sgl:SG1785"/>
<dbReference type="eggNOG" id="COG1381">
    <property type="taxonomic scope" value="Bacteria"/>
</dbReference>
<dbReference type="HOGENOM" id="CLU_066645_1_0_6"/>
<dbReference type="OrthoDB" id="9804792at2"/>
<dbReference type="BioCyc" id="SGLO343509:SGP1_RS16205-MONOMER"/>
<dbReference type="Proteomes" id="UP000001932">
    <property type="component" value="Chromosome"/>
</dbReference>
<dbReference type="GO" id="GO:0043590">
    <property type="term" value="C:bacterial nucleoid"/>
    <property type="evidence" value="ECO:0007669"/>
    <property type="project" value="TreeGrafter"/>
</dbReference>
<dbReference type="GO" id="GO:0006310">
    <property type="term" value="P:DNA recombination"/>
    <property type="evidence" value="ECO:0007669"/>
    <property type="project" value="UniProtKB-UniRule"/>
</dbReference>
<dbReference type="GO" id="GO:0006302">
    <property type="term" value="P:double-strand break repair"/>
    <property type="evidence" value="ECO:0007669"/>
    <property type="project" value="TreeGrafter"/>
</dbReference>
<dbReference type="Gene3D" id="2.40.50.140">
    <property type="entry name" value="Nucleic acid-binding proteins"/>
    <property type="match status" value="1"/>
</dbReference>
<dbReference type="Gene3D" id="1.20.1440.120">
    <property type="entry name" value="Recombination protein O, C-terminal domain"/>
    <property type="match status" value="1"/>
</dbReference>
<dbReference type="HAMAP" id="MF_00201">
    <property type="entry name" value="RecO"/>
    <property type="match status" value="1"/>
</dbReference>
<dbReference type="InterPro" id="IPR037278">
    <property type="entry name" value="ARFGAP/RecO"/>
</dbReference>
<dbReference type="InterPro" id="IPR022572">
    <property type="entry name" value="DNA_rep/recomb_RecO_N"/>
</dbReference>
<dbReference type="InterPro" id="IPR012340">
    <property type="entry name" value="NA-bd_OB-fold"/>
</dbReference>
<dbReference type="InterPro" id="IPR003717">
    <property type="entry name" value="RecO"/>
</dbReference>
<dbReference type="InterPro" id="IPR042242">
    <property type="entry name" value="RecO_C"/>
</dbReference>
<dbReference type="NCBIfam" id="TIGR00613">
    <property type="entry name" value="reco"/>
    <property type="match status" value="1"/>
</dbReference>
<dbReference type="PANTHER" id="PTHR33991">
    <property type="entry name" value="DNA REPAIR PROTEIN RECO"/>
    <property type="match status" value="1"/>
</dbReference>
<dbReference type="PANTHER" id="PTHR33991:SF1">
    <property type="entry name" value="DNA REPAIR PROTEIN RECO"/>
    <property type="match status" value="1"/>
</dbReference>
<dbReference type="Pfam" id="PF02565">
    <property type="entry name" value="RecO_C"/>
    <property type="match status" value="1"/>
</dbReference>
<dbReference type="Pfam" id="PF11967">
    <property type="entry name" value="RecO_N"/>
    <property type="match status" value="1"/>
</dbReference>
<dbReference type="SUPFAM" id="SSF57863">
    <property type="entry name" value="ArfGap/RecO-like zinc finger"/>
    <property type="match status" value="1"/>
</dbReference>
<dbReference type="SUPFAM" id="SSF50249">
    <property type="entry name" value="Nucleic acid-binding proteins"/>
    <property type="match status" value="1"/>
</dbReference>
<comment type="function">
    <text evidence="1">Involved in DNA repair and RecF pathway recombination.</text>
</comment>
<comment type="similarity">
    <text evidence="1">Belongs to the RecO family.</text>
</comment>
<proteinExistence type="inferred from homology"/>
<name>RECO_SODGM</name>
<keyword id="KW-0227">DNA damage</keyword>
<keyword id="KW-0233">DNA recombination</keyword>
<keyword id="KW-0234">DNA repair</keyword>
<feature type="chain" id="PRO_0000264844" description="DNA repair protein RecO">
    <location>
        <begin position="1"/>
        <end position="260"/>
    </location>
</feature>
<feature type="region of interest" description="Disordered" evidence="2">
    <location>
        <begin position="239"/>
        <end position="260"/>
    </location>
</feature>
<reference key="1">
    <citation type="journal article" date="2006" name="Genome Res.">
        <title>Massive genome erosion and functional adaptations provide insights into the symbiotic lifestyle of Sodalis glossinidius in the tsetse host.</title>
        <authorList>
            <person name="Toh H."/>
            <person name="Weiss B.L."/>
            <person name="Perkin S.A.H."/>
            <person name="Yamashita A."/>
            <person name="Oshima K."/>
            <person name="Hattori M."/>
            <person name="Aksoy S."/>
        </authorList>
    </citation>
    <scope>NUCLEOTIDE SEQUENCE [LARGE SCALE GENOMIC DNA]</scope>
    <source>
        <strain>morsitans</strain>
    </source>
</reference>
<evidence type="ECO:0000255" key="1">
    <source>
        <dbReference type="HAMAP-Rule" id="MF_00201"/>
    </source>
</evidence>
<evidence type="ECO:0000256" key="2">
    <source>
        <dbReference type="SAM" id="MobiDB-lite"/>
    </source>
</evidence>
<gene>
    <name evidence="1" type="primary">recO</name>
    <name type="ordered locus">SG1785</name>
</gene>
<sequence length="260" mass="28994">MDGWQRAFVLHARPYSETSLLLDFFTEQQGRVRVLAKGARSRRSALKGVLQPFTPLLARWSGRGEVKTLRSAEPVSLGLPLSGLMLYSGLYINELLSRVLDHETDYSKLFYDYLHCLQWLAGATGSPEPALRRFELALLSHLGYGVDFLHCAGSGEPVDDAMTYRYREEKGFTASVLLDRYSFSGRELRALAEGEFPDIDTLRAAKRFTRMALKPYLGGKPLKSHELFRQFLDRRPQASAGVAAARKAGGDGSDGDEGEQ</sequence>
<organism>
    <name type="scientific">Sodalis glossinidius (strain morsitans)</name>
    <dbReference type="NCBI Taxonomy" id="343509"/>
    <lineage>
        <taxon>Bacteria</taxon>
        <taxon>Pseudomonadati</taxon>
        <taxon>Pseudomonadota</taxon>
        <taxon>Gammaproteobacteria</taxon>
        <taxon>Enterobacterales</taxon>
        <taxon>Bruguierivoracaceae</taxon>
        <taxon>Sodalis</taxon>
    </lineage>
</organism>
<protein>
    <recommendedName>
        <fullName evidence="1">DNA repair protein RecO</fullName>
    </recommendedName>
    <alternativeName>
        <fullName evidence="1">Recombination protein O</fullName>
    </alternativeName>
</protein>
<accession>Q2NS15</accession>